<comment type="function">
    <text evidence="4">Probable phosphodiesterase (PDE) that catalyzes the hydrolysis of cyclic diguanylate (c-di-GMP). Increases motility and decreases biofilm formation in vivo.</text>
</comment>
<comment type="catalytic activity">
    <reaction evidence="1">
        <text>3',3'-c-di-GMP + 2 H2O = 2 GMP + 2 H(+)</text>
        <dbReference type="Rhea" id="RHEA:52928"/>
        <dbReference type="ChEBI" id="CHEBI:15377"/>
        <dbReference type="ChEBI" id="CHEBI:15378"/>
        <dbReference type="ChEBI" id="CHEBI:58115"/>
        <dbReference type="ChEBI" id="CHEBI:58805"/>
    </reaction>
</comment>
<comment type="induction">
    <text evidence="4">Transcripts are more abundant in biofilm cells than in planktonic cells.</text>
</comment>
<dbReference type="EC" id="3.1.4.-" evidence="4"/>
<dbReference type="EMBL" id="AE003852">
    <property type="protein sequence ID" value="AAF94506.1"/>
    <property type="molecule type" value="Genomic_DNA"/>
</dbReference>
<dbReference type="PIR" id="G82211">
    <property type="entry name" value="G82211"/>
</dbReference>
<dbReference type="SMR" id="Q9KSB1"/>
<dbReference type="STRING" id="243277.VC_1348"/>
<dbReference type="DNASU" id="2614802"/>
<dbReference type="EnsemblBacteria" id="AAF94506">
    <property type="protein sequence ID" value="AAF94506"/>
    <property type="gene ID" value="VC_1348"/>
</dbReference>
<dbReference type="KEGG" id="vch:VC_1348"/>
<dbReference type="eggNOG" id="COG3437">
    <property type="taxonomic scope" value="Bacteria"/>
</dbReference>
<dbReference type="HOGENOM" id="CLU_000445_92_10_6"/>
<dbReference type="PHI-base" id="PHI:3230"/>
<dbReference type="Proteomes" id="UP000000584">
    <property type="component" value="Chromosome 1"/>
</dbReference>
<dbReference type="GO" id="GO:0008081">
    <property type="term" value="F:phosphoric diester hydrolase activity"/>
    <property type="evidence" value="ECO:0007669"/>
    <property type="project" value="UniProtKB-ARBA"/>
</dbReference>
<dbReference type="GO" id="GO:0000160">
    <property type="term" value="P:phosphorelay signal transduction system"/>
    <property type="evidence" value="ECO:0007669"/>
    <property type="project" value="InterPro"/>
</dbReference>
<dbReference type="CDD" id="cd00077">
    <property type="entry name" value="HDc"/>
    <property type="match status" value="1"/>
</dbReference>
<dbReference type="CDD" id="cd19920">
    <property type="entry name" value="REC_PA4781-like"/>
    <property type="match status" value="1"/>
</dbReference>
<dbReference type="FunFam" id="1.10.3210.10:FF:000018">
    <property type="entry name" value="Two-component system response regulator"/>
    <property type="match status" value="1"/>
</dbReference>
<dbReference type="FunFam" id="3.40.50.2300:FF:000328">
    <property type="entry name" value="Two-component system response regulator"/>
    <property type="match status" value="1"/>
</dbReference>
<dbReference type="Gene3D" id="3.40.50.2300">
    <property type="match status" value="1"/>
</dbReference>
<dbReference type="Gene3D" id="1.10.3210.10">
    <property type="entry name" value="Hypothetical protein af1432"/>
    <property type="match status" value="1"/>
</dbReference>
<dbReference type="InterPro" id="IPR011006">
    <property type="entry name" value="CheY-like_superfamily"/>
</dbReference>
<dbReference type="InterPro" id="IPR052020">
    <property type="entry name" value="Cyclic_di-GMP/3'3'-cGAMP_PDE"/>
</dbReference>
<dbReference type="InterPro" id="IPR003607">
    <property type="entry name" value="HD/PDEase_dom"/>
</dbReference>
<dbReference type="InterPro" id="IPR037522">
    <property type="entry name" value="HD_GYP_dom"/>
</dbReference>
<dbReference type="InterPro" id="IPR001789">
    <property type="entry name" value="Sig_transdc_resp-reg_receiver"/>
</dbReference>
<dbReference type="PANTHER" id="PTHR45228">
    <property type="entry name" value="CYCLIC DI-GMP PHOSPHODIESTERASE TM_0186-RELATED"/>
    <property type="match status" value="1"/>
</dbReference>
<dbReference type="PANTHER" id="PTHR45228:SF5">
    <property type="entry name" value="CYCLIC DI-GMP PHOSPHODIESTERASE VC_1348-RELATED"/>
    <property type="match status" value="1"/>
</dbReference>
<dbReference type="Pfam" id="PF13487">
    <property type="entry name" value="HD_5"/>
    <property type="match status" value="1"/>
</dbReference>
<dbReference type="Pfam" id="PF00072">
    <property type="entry name" value="Response_reg"/>
    <property type="match status" value="1"/>
</dbReference>
<dbReference type="SMART" id="SM00471">
    <property type="entry name" value="HDc"/>
    <property type="match status" value="1"/>
</dbReference>
<dbReference type="SMART" id="SM00448">
    <property type="entry name" value="REC"/>
    <property type="match status" value="1"/>
</dbReference>
<dbReference type="SUPFAM" id="SSF52172">
    <property type="entry name" value="CheY-like"/>
    <property type="match status" value="1"/>
</dbReference>
<dbReference type="SUPFAM" id="SSF109604">
    <property type="entry name" value="HD-domain/PDEase-like"/>
    <property type="match status" value="1"/>
</dbReference>
<dbReference type="PROSITE" id="PS51832">
    <property type="entry name" value="HD_GYP"/>
    <property type="match status" value="1"/>
</dbReference>
<dbReference type="PROSITE" id="PS50110">
    <property type="entry name" value="RESPONSE_REGULATORY"/>
    <property type="match status" value="1"/>
</dbReference>
<reference key="1">
    <citation type="journal article" date="2000" name="Nature">
        <title>DNA sequence of both chromosomes of the cholera pathogen Vibrio cholerae.</title>
        <authorList>
            <person name="Heidelberg J.F."/>
            <person name="Eisen J.A."/>
            <person name="Nelson W.C."/>
            <person name="Clayton R.A."/>
            <person name="Gwinn M.L."/>
            <person name="Dodson R.J."/>
            <person name="Haft D.H."/>
            <person name="Hickey E.K."/>
            <person name="Peterson J.D."/>
            <person name="Umayam L.A."/>
            <person name="Gill S.R."/>
            <person name="Nelson K.E."/>
            <person name="Read T.D."/>
            <person name="Tettelin H."/>
            <person name="Richardson D.L."/>
            <person name="Ermolaeva M.D."/>
            <person name="Vamathevan J.J."/>
            <person name="Bass S."/>
            <person name="Qin H."/>
            <person name="Dragoi I."/>
            <person name="Sellers P."/>
            <person name="McDonald L.A."/>
            <person name="Utterback T.R."/>
            <person name="Fleischmann R.D."/>
            <person name="Nierman W.C."/>
            <person name="White O."/>
            <person name="Salzberg S.L."/>
            <person name="Smith H.O."/>
            <person name="Colwell R.R."/>
            <person name="Mekalanos J.J."/>
            <person name="Venter J.C."/>
            <person name="Fraser C.M."/>
        </authorList>
    </citation>
    <scope>NUCLEOTIDE SEQUENCE [LARGE SCALE GENOMIC DNA]</scope>
    <source>
        <strain>ATCC 39315 / El Tor Inaba N16961</strain>
    </source>
</reference>
<reference key="2">
    <citation type="journal article" date="2014" name="BMC Microbiol.">
        <title>A systematic analysis of the in vitro and in vivo functions of the HD-GYP domain proteins of Vibrio cholerae.</title>
        <authorList>
            <person name="McKee R.W."/>
            <person name="Kariisa A."/>
            <person name="Mudrak B."/>
            <person name="Whitaker C."/>
            <person name="Tamayo R."/>
        </authorList>
    </citation>
    <scope>FUNCTION</scope>
    <scope>CATALYTIC ACTIVITY</scope>
    <scope>INDUCTION</scope>
    <scope>MUTAGENESIS OF 279-HIS-ASP-280</scope>
    <source>
        <strain>El Tor C6706</strain>
    </source>
</reference>
<accession>Q9KSB1</accession>
<organism>
    <name type="scientific">Vibrio cholerae serotype O1 (strain ATCC 39315 / El Tor Inaba N16961)</name>
    <dbReference type="NCBI Taxonomy" id="243277"/>
    <lineage>
        <taxon>Bacteria</taxon>
        <taxon>Pseudomonadati</taxon>
        <taxon>Pseudomonadota</taxon>
        <taxon>Gammaproteobacteria</taxon>
        <taxon>Vibrionales</taxon>
        <taxon>Vibrionaceae</taxon>
        <taxon>Vibrio</taxon>
    </lineage>
</organism>
<keyword id="KW-0973">c-di-GMP</keyword>
<keyword id="KW-0378">Hydrolase</keyword>
<keyword id="KW-0597">Phosphoprotein</keyword>
<keyword id="KW-1185">Reference proteome</keyword>
<sequence length="441" mass="49422">MATANIAIKQNSSTNIAFIERMPSPSLHRILYNLFSKFSYSLSNSCHFNLKCLNFVMNRMFHMSMEDLSQCTILIVDDSPDNIAFMSQGLAQYYRIKAARSGKVALEILAQYPIDLVLLDIVMPEMSGYEVINQIKHNPHTEHIPVIFLTGKSNPEDEQLGFELGAVDYVFKPVSIPLLKSRVHTHLQNKRSKDILLNQNDYLETEVLRRSGELDRMQDAVVFALASLAETRDPETGNHLLRTQHYVKVLAQRLATTDKYRDVLSPTVIDTYFKAAPLHDIGKVGIPDNILLKPGKLTPDEFTTMRNHALLGKLALEKAEKLSGACTALINVAKEIAMGHHEKWDGSGYPLGLKGDDIPLSARLMALADVYDALICRRVYKEPMSHEEAKAIILQGRGSHFDPMVIDAFLIEEQNFIDIAQKFADEESAMVPIQLGQQASG</sequence>
<protein>
    <recommendedName>
        <fullName evidence="5">Probable cyclic di-GMP phosphodiesterase VC_1348</fullName>
        <ecNumber evidence="4">3.1.4.-</ecNumber>
    </recommendedName>
</protein>
<name>CDPD2_VIBCH</name>
<gene>
    <name evidence="6" type="ordered locus">VC_1348</name>
</gene>
<evidence type="ECO:0000250" key="1">
    <source>
        <dbReference type="UniProtKB" id="Q9KSG1"/>
    </source>
</evidence>
<evidence type="ECO:0000255" key="2">
    <source>
        <dbReference type="PROSITE-ProRule" id="PRU00169"/>
    </source>
</evidence>
<evidence type="ECO:0000255" key="3">
    <source>
        <dbReference type="PROSITE-ProRule" id="PRU01176"/>
    </source>
</evidence>
<evidence type="ECO:0000269" key="4">
    <source>
    </source>
</evidence>
<evidence type="ECO:0000305" key="5"/>
<evidence type="ECO:0000312" key="6">
    <source>
        <dbReference type="EMBL" id="AAF94506.1"/>
    </source>
</evidence>
<proteinExistence type="evidence at protein level"/>
<feature type="chain" id="PRO_0000439660" description="Probable cyclic di-GMP phosphodiesterase VC_1348">
    <location>
        <begin position="1"/>
        <end position="441"/>
    </location>
</feature>
<feature type="domain" description="Response regulatory" evidence="2">
    <location>
        <begin position="72"/>
        <end position="187"/>
    </location>
</feature>
<feature type="domain" description="HD-GYP" evidence="3">
    <location>
        <begin position="214"/>
        <end position="425"/>
    </location>
</feature>
<feature type="modified residue" description="4-aspartylphosphate" evidence="2">
    <location>
        <position position="120"/>
    </location>
</feature>
<feature type="mutagenesis site" description="Does not increase motility." evidence="4">
    <original>HD</original>
    <variation>AA</variation>
    <location>
        <begin position="279"/>
        <end position="280"/>
    </location>
</feature>